<accession>Q6MMX4</accession>
<sequence>MRAYLRPLSFLYDQVVGVKNNLYDRGVFGVFKAPVPVVSIGNLTVGGTGKTPITDFCLKSLVADGKKVAVISRSYRADASAPCLVDVDHPFAARYFGDEPVLLAQANPQVSVYVGPSKWRTARYAVEKHKYDLLIVDDGFQHRRLHRDLNIVILDATESLSNYEVLPEGRARESWAGIERADVLILSKCNLAPEDELKALEARLPKNKEVLYFGYEIQQCQNVKTGQVLHRDELKGKKLFLVSAIARPDVFEKMMREIGEVSNQSLHFRDHHQYTADDVKNIENAFKKSQADYLVTTGKDAVKLRQLFNDTAILWSTSLEVAESGRKGRLHEIITQVLR</sequence>
<name>LPXK_BDEBA</name>
<proteinExistence type="inferred from homology"/>
<dbReference type="EC" id="2.7.1.130" evidence="1"/>
<dbReference type="EMBL" id="BX842650">
    <property type="protein sequence ID" value="CAE79379.1"/>
    <property type="molecule type" value="Genomic_DNA"/>
</dbReference>
<dbReference type="RefSeq" id="WP_011163981.1">
    <property type="nucleotide sequence ID" value="NC_005363.1"/>
</dbReference>
<dbReference type="SMR" id="Q6MMX4"/>
<dbReference type="STRING" id="264462.Bd1499"/>
<dbReference type="GeneID" id="93012498"/>
<dbReference type="KEGG" id="bba:Bd1499"/>
<dbReference type="eggNOG" id="COG1663">
    <property type="taxonomic scope" value="Bacteria"/>
</dbReference>
<dbReference type="HOGENOM" id="CLU_038816_6_0_7"/>
<dbReference type="UniPathway" id="UPA00359">
    <property type="reaction ID" value="UER00482"/>
</dbReference>
<dbReference type="Proteomes" id="UP000008080">
    <property type="component" value="Chromosome"/>
</dbReference>
<dbReference type="GO" id="GO:0005886">
    <property type="term" value="C:plasma membrane"/>
    <property type="evidence" value="ECO:0007669"/>
    <property type="project" value="TreeGrafter"/>
</dbReference>
<dbReference type="GO" id="GO:0005524">
    <property type="term" value="F:ATP binding"/>
    <property type="evidence" value="ECO:0007669"/>
    <property type="project" value="UniProtKB-UniRule"/>
</dbReference>
<dbReference type="GO" id="GO:0009029">
    <property type="term" value="F:tetraacyldisaccharide 4'-kinase activity"/>
    <property type="evidence" value="ECO:0007669"/>
    <property type="project" value="UniProtKB-UniRule"/>
</dbReference>
<dbReference type="GO" id="GO:0009245">
    <property type="term" value="P:lipid A biosynthetic process"/>
    <property type="evidence" value="ECO:0007669"/>
    <property type="project" value="UniProtKB-UniRule"/>
</dbReference>
<dbReference type="GO" id="GO:0009244">
    <property type="term" value="P:lipopolysaccharide core region biosynthetic process"/>
    <property type="evidence" value="ECO:0007669"/>
    <property type="project" value="TreeGrafter"/>
</dbReference>
<dbReference type="HAMAP" id="MF_00409">
    <property type="entry name" value="LpxK"/>
    <property type="match status" value="1"/>
</dbReference>
<dbReference type="InterPro" id="IPR003758">
    <property type="entry name" value="LpxK"/>
</dbReference>
<dbReference type="InterPro" id="IPR027417">
    <property type="entry name" value="P-loop_NTPase"/>
</dbReference>
<dbReference type="NCBIfam" id="TIGR00682">
    <property type="entry name" value="lpxK"/>
    <property type="match status" value="1"/>
</dbReference>
<dbReference type="PANTHER" id="PTHR42724">
    <property type="entry name" value="TETRAACYLDISACCHARIDE 4'-KINASE"/>
    <property type="match status" value="1"/>
</dbReference>
<dbReference type="PANTHER" id="PTHR42724:SF1">
    <property type="entry name" value="TETRAACYLDISACCHARIDE 4'-KINASE, MITOCHONDRIAL-RELATED"/>
    <property type="match status" value="1"/>
</dbReference>
<dbReference type="Pfam" id="PF02606">
    <property type="entry name" value="LpxK"/>
    <property type="match status" value="1"/>
</dbReference>
<dbReference type="SUPFAM" id="SSF52540">
    <property type="entry name" value="P-loop containing nucleoside triphosphate hydrolases"/>
    <property type="match status" value="1"/>
</dbReference>
<comment type="function">
    <text evidence="1">Transfers the gamma-phosphate of ATP to the 4'-position of a tetraacyldisaccharide 1-phosphate intermediate (termed DS-1-P) to form tetraacyldisaccharide 1,4'-bis-phosphate (lipid IVA).</text>
</comment>
<comment type="catalytic activity">
    <reaction evidence="1">
        <text>a lipid A disaccharide + ATP = a lipid IVA + ADP + H(+)</text>
        <dbReference type="Rhea" id="RHEA:67840"/>
        <dbReference type="ChEBI" id="CHEBI:15378"/>
        <dbReference type="ChEBI" id="CHEBI:30616"/>
        <dbReference type="ChEBI" id="CHEBI:176343"/>
        <dbReference type="ChEBI" id="CHEBI:176425"/>
        <dbReference type="ChEBI" id="CHEBI:456216"/>
        <dbReference type="EC" id="2.7.1.130"/>
    </reaction>
</comment>
<comment type="pathway">
    <text evidence="1">Glycolipid biosynthesis; lipid IV(A) biosynthesis; lipid IV(A) from (3R)-3-hydroxytetradecanoyl-[acyl-carrier-protein] and UDP-N-acetyl-alpha-D-glucosamine: step 6/6.</text>
</comment>
<comment type="similarity">
    <text evidence="1">Belongs to the LpxK family.</text>
</comment>
<organism>
    <name type="scientific">Bdellovibrio bacteriovorus (strain ATCC 15356 / DSM 50701 / NCIMB 9529 / HD100)</name>
    <dbReference type="NCBI Taxonomy" id="264462"/>
    <lineage>
        <taxon>Bacteria</taxon>
        <taxon>Pseudomonadati</taxon>
        <taxon>Bdellovibrionota</taxon>
        <taxon>Bdellovibrionia</taxon>
        <taxon>Bdellovibrionales</taxon>
        <taxon>Pseudobdellovibrionaceae</taxon>
        <taxon>Bdellovibrio</taxon>
    </lineage>
</organism>
<keyword id="KW-0067">ATP-binding</keyword>
<keyword id="KW-0418">Kinase</keyword>
<keyword id="KW-0441">Lipid A biosynthesis</keyword>
<keyword id="KW-0444">Lipid biosynthesis</keyword>
<keyword id="KW-0443">Lipid metabolism</keyword>
<keyword id="KW-0547">Nucleotide-binding</keyword>
<keyword id="KW-1185">Reference proteome</keyword>
<keyword id="KW-0808">Transferase</keyword>
<reference key="1">
    <citation type="journal article" date="2004" name="Science">
        <title>A predator unmasked: life cycle of Bdellovibrio bacteriovorus from a genomic perspective.</title>
        <authorList>
            <person name="Rendulic S."/>
            <person name="Jagtap P."/>
            <person name="Rosinus A."/>
            <person name="Eppinger M."/>
            <person name="Baar C."/>
            <person name="Lanz C."/>
            <person name="Keller H."/>
            <person name="Lambert C."/>
            <person name="Evans K.J."/>
            <person name="Goesmann A."/>
            <person name="Meyer F."/>
            <person name="Sockett R.E."/>
            <person name="Schuster S.C."/>
        </authorList>
    </citation>
    <scope>NUCLEOTIDE SEQUENCE [LARGE SCALE GENOMIC DNA]</scope>
    <source>
        <strain>ATCC 15356 / DSM 50701 / NCIMB 9529 / HD100</strain>
    </source>
</reference>
<gene>
    <name evidence="1" type="primary">lpxK</name>
    <name type="ordered locus">Bd1499</name>
</gene>
<protein>
    <recommendedName>
        <fullName evidence="1">Tetraacyldisaccharide 4'-kinase</fullName>
        <ecNumber evidence="1">2.7.1.130</ecNumber>
    </recommendedName>
    <alternativeName>
        <fullName evidence="1">Lipid A 4'-kinase</fullName>
    </alternativeName>
</protein>
<feature type="chain" id="PRO_0000340824" description="Tetraacyldisaccharide 4'-kinase">
    <location>
        <begin position="1"/>
        <end position="339"/>
    </location>
</feature>
<feature type="binding site" evidence="1">
    <location>
        <begin position="44"/>
        <end position="51"/>
    </location>
    <ligand>
        <name>ATP</name>
        <dbReference type="ChEBI" id="CHEBI:30616"/>
    </ligand>
</feature>
<evidence type="ECO:0000255" key="1">
    <source>
        <dbReference type="HAMAP-Rule" id="MF_00409"/>
    </source>
</evidence>